<comment type="function">
    <text evidence="1">Specifically methylates position 2 of adenine 2503 in 23S rRNA and position 2 of adenine 37 in tRNAs.</text>
</comment>
<comment type="catalytic activity">
    <reaction evidence="1">
        <text>adenosine(2503) in 23S rRNA + 2 reduced [2Fe-2S]-[ferredoxin] + 2 S-adenosyl-L-methionine = 2-methyladenosine(2503) in 23S rRNA + 5'-deoxyadenosine + L-methionine + 2 oxidized [2Fe-2S]-[ferredoxin] + S-adenosyl-L-homocysteine</text>
        <dbReference type="Rhea" id="RHEA:42916"/>
        <dbReference type="Rhea" id="RHEA-COMP:10000"/>
        <dbReference type="Rhea" id="RHEA-COMP:10001"/>
        <dbReference type="Rhea" id="RHEA-COMP:10152"/>
        <dbReference type="Rhea" id="RHEA-COMP:10282"/>
        <dbReference type="ChEBI" id="CHEBI:17319"/>
        <dbReference type="ChEBI" id="CHEBI:33737"/>
        <dbReference type="ChEBI" id="CHEBI:33738"/>
        <dbReference type="ChEBI" id="CHEBI:57844"/>
        <dbReference type="ChEBI" id="CHEBI:57856"/>
        <dbReference type="ChEBI" id="CHEBI:59789"/>
        <dbReference type="ChEBI" id="CHEBI:74411"/>
        <dbReference type="ChEBI" id="CHEBI:74497"/>
        <dbReference type="EC" id="2.1.1.192"/>
    </reaction>
</comment>
<comment type="catalytic activity">
    <reaction evidence="1">
        <text>adenosine(37) in tRNA + 2 reduced [2Fe-2S]-[ferredoxin] + 2 S-adenosyl-L-methionine = 2-methyladenosine(37) in tRNA + 5'-deoxyadenosine + L-methionine + 2 oxidized [2Fe-2S]-[ferredoxin] + S-adenosyl-L-homocysteine</text>
        <dbReference type="Rhea" id="RHEA:43332"/>
        <dbReference type="Rhea" id="RHEA-COMP:10000"/>
        <dbReference type="Rhea" id="RHEA-COMP:10001"/>
        <dbReference type="Rhea" id="RHEA-COMP:10162"/>
        <dbReference type="Rhea" id="RHEA-COMP:10485"/>
        <dbReference type="ChEBI" id="CHEBI:17319"/>
        <dbReference type="ChEBI" id="CHEBI:33737"/>
        <dbReference type="ChEBI" id="CHEBI:33738"/>
        <dbReference type="ChEBI" id="CHEBI:57844"/>
        <dbReference type="ChEBI" id="CHEBI:57856"/>
        <dbReference type="ChEBI" id="CHEBI:59789"/>
        <dbReference type="ChEBI" id="CHEBI:74411"/>
        <dbReference type="ChEBI" id="CHEBI:74497"/>
        <dbReference type="EC" id="2.1.1.192"/>
    </reaction>
</comment>
<comment type="cofactor">
    <cofactor evidence="1">
        <name>[4Fe-4S] cluster</name>
        <dbReference type="ChEBI" id="CHEBI:49883"/>
    </cofactor>
    <text evidence="1">Binds 1 [4Fe-4S] cluster. The cluster is coordinated with 3 cysteines and an exchangeable S-adenosyl-L-methionine.</text>
</comment>
<comment type="subcellular location">
    <subcellularLocation>
        <location evidence="1">Cytoplasm</location>
    </subcellularLocation>
</comment>
<comment type="miscellaneous">
    <text evidence="1">Reaction proceeds by a ping-pong mechanism involving intermediate methylation of a conserved cysteine residue.</text>
</comment>
<comment type="similarity">
    <text evidence="1">Belongs to the radical SAM superfamily. RlmN family.</text>
</comment>
<keyword id="KW-0004">4Fe-4S</keyword>
<keyword id="KW-0963">Cytoplasm</keyword>
<keyword id="KW-1015">Disulfide bond</keyword>
<keyword id="KW-0408">Iron</keyword>
<keyword id="KW-0411">Iron-sulfur</keyword>
<keyword id="KW-0479">Metal-binding</keyword>
<keyword id="KW-0489">Methyltransferase</keyword>
<keyword id="KW-0698">rRNA processing</keyword>
<keyword id="KW-0949">S-adenosyl-L-methionine</keyword>
<keyword id="KW-0808">Transferase</keyword>
<keyword id="KW-0819">tRNA processing</keyword>
<accession>A4TC75</accession>
<organism>
    <name type="scientific">Mycolicibacterium gilvum (strain PYR-GCK)</name>
    <name type="common">Mycobacterium gilvum (strain PYR-GCK)</name>
    <dbReference type="NCBI Taxonomy" id="350054"/>
    <lineage>
        <taxon>Bacteria</taxon>
        <taxon>Bacillati</taxon>
        <taxon>Actinomycetota</taxon>
        <taxon>Actinomycetes</taxon>
        <taxon>Mycobacteriales</taxon>
        <taxon>Mycobacteriaceae</taxon>
        <taxon>Mycolicibacterium</taxon>
    </lineage>
</organism>
<sequence>MPDPLPLVFDAPRRALPPRHFADLADTERAAAVADLGLPAFRGKQLANQYFGRLISDPSQMTDLPAGVRDQVGAALFPELLEAAREIECDRGETRKVLWRAVDKTTFESVLMRYPDRNTVCISSQAGCGMACPFCATGQGGLKRNLSTAEILEQVRFASAELRDREGGRLSNIVFMGMGEPLANYNRVVAAVRRITASSPHGFGISARSVTVSTVGLAPAIRKLADEKLNVTLAVSLHTPDDELRDTLVPVNNRWKVDEVLDAARYYADLTGRRVSIEYALIRDVNDQPWRADLLGRKLHATLGPLVHVNLIPLNPTPGSEWDASPKPVEREFVRRVRAKGVSCTVRDTRGREIAAACGQLAAQG</sequence>
<proteinExistence type="inferred from homology"/>
<reference key="1">
    <citation type="submission" date="2007-04" db="EMBL/GenBank/DDBJ databases">
        <title>Complete sequence of chromosome of Mycobacterium gilvum PYR-GCK.</title>
        <authorList>
            <consortium name="US DOE Joint Genome Institute"/>
            <person name="Copeland A."/>
            <person name="Lucas S."/>
            <person name="Lapidus A."/>
            <person name="Barry K."/>
            <person name="Detter J.C."/>
            <person name="Glavina del Rio T."/>
            <person name="Hammon N."/>
            <person name="Israni S."/>
            <person name="Dalin E."/>
            <person name="Tice H."/>
            <person name="Pitluck S."/>
            <person name="Chain P."/>
            <person name="Malfatti S."/>
            <person name="Shin M."/>
            <person name="Vergez L."/>
            <person name="Schmutz J."/>
            <person name="Larimer F."/>
            <person name="Land M."/>
            <person name="Hauser L."/>
            <person name="Kyrpides N."/>
            <person name="Mikhailova N."/>
            <person name="Miller C."/>
            <person name="Richardson P."/>
        </authorList>
    </citation>
    <scope>NUCLEOTIDE SEQUENCE [LARGE SCALE GENOMIC DNA]</scope>
    <source>
        <strain>PYR-GCK</strain>
    </source>
</reference>
<name>RLMN_MYCGI</name>
<protein>
    <recommendedName>
        <fullName evidence="1">Probable dual-specificity RNA methyltransferase RlmN</fullName>
        <ecNumber evidence="1">2.1.1.192</ecNumber>
    </recommendedName>
    <alternativeName>
        <fullName evidence="1">23S rRNA (adenine(2503)-C(2))-methyltransferase</fullName>
    </alternativeName>
    <alternativeName>
        <fullName evidence="1">23S rRNA m2A2503 methyltransferase</fullName>
    </alternativeName>
    <alternativeName>
        <fullName evidence="1">Ribosomal RNA large subunit methyltransferase N</fullName>
    </alternativeName>
    <alternativeName>
        <fullName evidence="1">tRNA (adenine(37)-C(2))-methyltransferase</fullName>
    </alternativeName>
    <alternativeName>
        <fullName evidence="1">tRNA m2A37 methyltransferase</fullName>
    </alternativeName>
</protein>
<feature type="chain" id="PRO_0000350261" description="Probable dual-specificity RNA methyltransferase RlmN">
    <location>
        <begin position="1"/>
        <end position="365"/>
    </location>
</feature>
<feature type="domain" description="Radical SAM core" evidence="2">
    <location>
        <begin position="114"/>
        <end position="352"/>
    </location>
</feature>
<feature type="active site" description="Proton acceptor" evidence="1">
    <location>
        <position position="108"/>
    </location>
</feature>
<feature type="active site" description="S-methylcysteine intermediate" evidence="1">
    <location>
        <position position="358"/>
    </location>
</feature>
<feature type="binding site" evidence="1">
    <location>
        <position position="128"/>
    </location>
    <ligand>
        <name>[4Fe-4S] cluster</name>
        <dbReference type="ChEBI" id="CHEBI:49883"/>
        <note>4Fe-4S-S-AdoMet</note>
    </ligand>
</feature>
<feature type="binding site" evidence="1">
    <location>
        <position position="132"/>
    </location>
    <ligand>
        <name>[4Fe-4S] cluster</name>
        <dbReference type="ChEBI" id="CHEBI:49883"/>
        <note>4Fe-4S-S-AdoMet</note>
    </ligand>
</feature>
<feature type="binding site" evidence="1">
    <location>
        <position position="135"/>
    </location>
    <ligand>
        <name>[4Fe-4S] cluster</name>
        <dbReference type="ChEBI" id="CHEBI:49883"/>
        <note>4Fe-4S-S-AdoMet</note>
    </ligand>
</feature>
<feature type="binding site" evidence="1">
    <location>
        <begin position="179"/>
        <end position="180"/>
    </location>
    <ligand>
        <name>S-adenosyl-L-methionine</name>
        <dbReference type="ChEBI" id="CHEBI:59789"/>
    </ligand>
</feature>
<feature type="binding site" evidence="1">
    <location>
        <position position="213"/>
    </location>
    <ligand>
        <name>S-adenosyl-L-methionine</name>
        <dbReference type="ChEBI" id="CHEBI:59789"/>
    </ligand>
</feature>
<feature type="binding site" evidence="1">
    <location>
        <begin position="236"/>
        <end position="238"/>
    </location>
    <ligand>
        <name>S-adenosyl-L-methionine</name>
        <dbReference type="ChEBI" id="CHEBI:59789"/>
    </ligand>
</feature>
<feature type="binding site" evidence="1">
    <location>
        <position position="315"/>
    </location>
    <ligand>
        <name>S-adenosyl-L-methionine</name>
        <dbReference type="ChEBI" id="CHEBI:59789"/>
    </ligand>
</feature>
<feature type="disulfide bond" description="(transient)" evidence="1">
    <location>
        <begin position="121"/>
        <end position="358"/>
    </location>
</feature>
<gene>
    <name evidence="1" type="primary">rlmN</name>
    <name type="ordered locus">Mflv_4121</name>
</gene>
<evidence type="ECO:0000255" key="1">
    <source>
        <dbReference type="HAMAP-Rule" id="MF_01849"/>
    </source>
</evidence>
<evidence type="ECO:0000255" key="2">
    <source>
        <dbReference type="PROSITE-ProRule" id="PRU01266"/>
    </source>
</evidence>
<dbReference type="EC" id="2.1.1.192" evidence="1"/>
<dbReference type="EMBL" id="CP000656">
    <property type="protein sequence ID" value="ABP46591.1"/>
    <property type="molecule type" value="Genomic_DNA"/>
</dbReference>
<dbReference type="SMR" id="A4TC75"/>
<dbReference type="STRING" id="350054.Mflv_4121"/>
<dbReference type="KEGG" id="mgi:Mflv_4121"/>
<dbReference type="eggNOG" id="COG0820">
    <property type="taxonomic scope" value="Bacteria"/>
</dbReference>
<dbReference type="HOGENOM" id="CLU_029101_0_2_11"/>
<dbReference type="OrthoDB" id="9793973at2"/>
<dbReference type="GO" id="GO:0005737">
    <property type="term" value="C:cytoplasm"/>
    <property type="evidence" value="ECO:0007669"/>
    <property type="project" value="UniProtKB-SubCell"/>
</dbReference>
<dbReference type="GO" id="GO:0051539">
    <property type="term" value="F:4 iron, 4 sulfur cluster binding"/>
    <property type="evidence" value="ECO:0007669"/>
    <property type="project" value="UniProtKB-UniRule"/>
</dbReference>
<dbReference type="GO" id="GO:0046872">
    <property type="term" value="F:metal ion binding"/>
    <property type="evidence" value="ECO:0007669"/>
    <property type="project" value="UniProtKB-KW"/>
</dbReference>
<dbReference type="GO" id="GO:0070040">
    <property type="term" value="F:rRNA (adenine(2503)-C2-)-methyltransferase activity"/>
    <property type="evidence" value="ECO:0007669"/>
    <property type="project" value="UniProtKB-UniRule"/>
</dbReference>
<dbReference type="GO" id="GO:0019843">
    <property type="term" value="F:rRNA binding"/>
    <property type="evidence" value="ECO:0007669"/>
    <property type="project" value="UniProtKB-UniRule"/>
</dbReference>
<dbReference type="GO" id="GO:0002935">
    <property type="term" value="F:tRNA (adenine(37)-C2)-methyltransferase activity"/>
    <property type="evidence" value="ECO:0007669"/>
    <property type="project" value="UniProtKB-UniRule"/>
</dbReference>
<dbReference type="GO" id="GO:0000049">
    <property type="term" value="F:tRNA binding"/>
    <property type="evidence" value="ECO:0007669"/>
    <property type="project" value="UniProtKB-UniRule"/>
</dbReference>
<dbReference type="GO" id="GO:0070475">
    <property type="term" value="P:rRNA base methylation"/>
    <property type="evidence" value="ECO:0007669"/>
    <property type="project" value="UniProtKB-UniRule"/>
</dbReference>
<dbReference type="GO" id="GO:0030488">
    <property type="term" value="P:tRNA methylation"/>
    <property type="evidence" value="ECO:0007669"/>
    <property type="project" value="UniProtKB-UniRule"/>
</dbReference>
<dbReference type="CDD" id="cd01335">
    <property type="entry name" value="Radical_SAM"/>
    <property type="match status" value="1"/>
</dbReference>
<dbReference type="FunFam" id="3.20.20.70:FF:000014">
    <property type="entry name" value="Probable dual-specificity RNA methyltransferase RlmN"/>
    <property type="match status" value="1"/>
</dbReference>
<dbReference type="Gene3D" id="1.10.150.530">
    <property type="match status" value="1"/>
</dbReference>
<dbReference type="Gene3D" id="3.20.20.70">
    <property type="entry name" value="Aldolase class I"/>
    <property type="match status" value="1"/>
</dbReference>
<dbReference type="HAMAP" id="MF_01849">
    <property type="entry name" value="RNA_methyltr_RlmN"/>
    <property type="match status" value="1"/>
</dbReference>
<dbReference type="InterPro" id="IPR013785">
    <property type="entry name" value="Aldolase_TIM"/>
</dbReference>
<dbReference type="InterPro" id="IPR006638">
    <property type="entry name" value="Elp3/MiaA/NifB-like_rSAM"/>
</dbReference>
<dbReference type="InterPro" id="IPR040072">
    <property type="entry name" value="Methyltransferase_A"/>
</dbReference>
<dbReference type="InterPro" id="IPR027492">
    <property type="entry name" value="RNA_MTrfase_RlmN"/>
</dbReference>
<dbReference type="InterPro" id="IPR004383">
    <property type="entry name" value="rRNA_lsu_MTrfase_RlmN/Cfr"/>
</dbReference>
<dbReference type="InterPro" id="IPR007197">
    <property type="entry name" value="rSAM"/>
</dbReference>
<dbReference type="NCBIfam" id="TIGR00048">
    <property type="entry name" value="rRNA_mod_RlmN"/>
    <property type="match status" value="1"/>
</dbReference>
<dbReference type="PANTHER" id="PTHR30544">
    <property type="entry name" value="23S RRNA METHYLTRANSFERASE"/>
    <property type="match status" value="1"/>
</dbReference>
<dbReference type="PANTHER" id="PTHR30544:SF5">
    <property type="entry name" value="RADICAL SAM CORE DOMAIN-CONTAINING PROTEIN"/>
    <property type="match status" value="1"/>
</dbReference>
<dbReference type="Pfam" id="PF04055">
    <property type="entry name" value="Radical_SAM"/>
    <property type="match status" value="1"/>
</dbReference>
<dbReference type="PIRSF" id="PIRSF006004">
    <property type="entry name" value="CHP00048"/>
    <property type="match status" value="1"/>
</dbReference>
<dbReference type="SFLD" id="SFLDF00275">
    <property type="entry name" value="adenosine_C2_methyltransferase"/>
    <property type="match status" value="1"/>
</dbReference>
<dbReference type="SFLD" id="SFLDG01062">
    <property type="entry name" value="methyltransferase_(Class_A)"/>
    <property type="match status" value="1"/>
</dbReference>
<dbReference type="SMART" id="SM00729">
    <property type="entry name" value="Elp3"/>
    <property type="match status" value="1"/>
</dbReference>
<dbReference type="SUPFAM" id="SSF102114">
    <property type="entry name" value="Radical SAM enzymes"/>
    <property type="match status" value="1"/>
</dbReference>
<dbReference type="PROSITE" id="PS51918">
    <property type="entry name" value="RADICAL_SAM"/>
    <property type="match status" value="1"/>
</dbReference>